<dbReference type="EMBL" id="CP001581">
    <property type="protein sequence ID" value="ACO84831.1"/>
    <property type="molecule type" value="Genomic_DNA"/>
</dbReference>
<dbReference type="RefSeq" id="WP_003357261.1">
    <property type="nucleotide sequence ID" value="NC_012563.1"/>
</dbReference>
<dbReference type="SMR" id="C1FMW3"/>
<dbReference type="GeneID" id="5186670"/>
<dbReference type="KEGG" id="cby:CLM_3960"/>
<dbReference type="eggNOG" id="COG0080">
    <property type="taxonomic scope" value="Bacteria"/>
</dbReference>
<dbReference type="HOGENOM" id="CLU_074237_2_1_9"/>
<dbReference type="Proteomes" id="UP000001374">
    <property type="component" value="Chromosome"/>
</dbReference>
<dbReference type="GO" id="GO:0022625">
    <property type="term" value="C:cytosolic large ribosomal subunit"/>
    <property type="evidence" value="ECO:0007669"/>
    <property type="project" value="TreeGrafter"/>
</dbReference>
<dbReference type="GO" id="GO:0070180">
    <property type="term" value="F:large ribosomal subunit rRNA binding"/>
    <property type="evidence" value="ECO:0007669"/>
    <property type="project" value="UniProtKB-UniRule"/>
</dbReference>
<dbReference type="GO" id="GO:0003735">
    <property type="term" value="F:structural constituent of ribosome"/>
    <property type="evidence" value="ECO:0007669"/>
    <property type="project" value="InterPro"/>
</dbReference>
<dbReference type="GO" id="GO:0006412">
    <property type="term" value="P:translation"/>
    <property type="evidence" value="ECO:0007669"/>
    <property type="project" value="UniProtKB-UniRule"/>
</dbReference>
<dbReference type="CDD" id="cd00349">
    <property type="entry name" value="Ribosomal_L11"/>
    <property type="match status" value="1"/>
</dbReference>
<dbReference type="FunFam" id="1.10.10.250:FF:000001">
    <property type="entry name" value="50S ribosomal protein L11"/>
    <property type="match status" value="1"/>
</dbReference>
<dbReference type="FunFam" id="3.30.1550.10:FF:000001">
    <property type="entry name" value="50S ribosomal protein L11"/>
    <property type="match status" value="1"/>
</dbReference>
<dbReference type="Gene3D" id="1.10.10.250">
    <property type="entry name" value="Ribosomal protein L11, C-terminal domain"/>
    <property type="match status" value="1"/>
</dbReference>
<dbReference type="Gene3D" id="3.30.1550.10">
    <property type="entry name" value="Ribosomal protein L11/L12, N-terminal domain"/>
    <property type="match status" value="1"/>
</dbReference>
<dbReference type="HAMAP" id="MF_00736">
    <property type="entry name" value="Ribosomal_uL11"/>
    <property type="match status" value="1"/>
</dbReference>
<dbReference type="InterPro" id="IPR000911">
    <property type="entry name" value="Ribosomal_uL11"/>
</dbReference>
<dbReference type="InterPro" id="IPR006519">
    <property type="entry name" value="Ribosomal_uL11_bac-typ"/>
</dbReference>
<dbReference type="InterPro" id="IPR020783">
    <property type="entry name" value="Ribosomal_uL11_C"/>
</dbReference>
<dbReference type="InterPro" id="IPR036769">
    <property type="entry name" value="Ribosomal_uL11_C_sf"/>
</dbReference>
<dbReference type="InterPro" id="IPR020784">
    <property type="entry name" value="Ribosomal_uL11_N"/>
</dbReference>
<dbReference type="InterPro" id="IPR036796">
    <property type="entry name" value="Ribosomal_uL11_N_sf"/>
</dbReference>
<dbReference type="NCBIfam" id="TIGR01632">
    <property type="entry name" value="L11_bact"/>
    <property type="match status" value="1"/>
</dbReference>
<dbReference type="PANTHER" id="PTHR11661">
    <property type="entry name" value="60S RIBOSOMAL PROTEIN L12"/>
    <property type="match status" value="1"/>
</dbReference>
<dbReference type="PANTHER" id="PTHR11661:SF1">
    <property type="entry name" value="LARGE RIBOSOMAL SUBUNIT PROTEIN UL11M"/>
    <property type="match status" value="1"/>
</dbReference>
<dbReference type="Pfam" id="PF00298">
    <property type="entry name" value="Ribosomal_L11"/>
    <property type="match status" value="1"/>
</dbReference>
<dbReference type="Pfam" id="PF03946">
    <property type="entry name" value="Ribosomal_L11_N"/>
    <property type="match status" value="1"/>
</dbReference>
<dbReference type="SMART" id="SM00649">
    <property type="entry name" value="RL11"/>
    <property type="match status" value="1"/>
</dbReference>
<dbReference type="SUPFAM" id="SSF54747">
    <property type="entry name" value="Ribosomal L11/L12e N-terminal domain"/>
    <property type="match status" value="1"/>
</dbReference>
<dbReference type="SUPFAM" id="SSF46906">
    <property type="entry name" value="Ribosomal protein L11, C-terminal domain"/>
    <property type="match status" value="1"/>
</dbReference>
<feature type="chain" id="PRO_1000195602" description="Large ribosomal subunit protein uL11">
    <location>
        <begin position="1"/>
        <end position="141"/>
    </location>
</feature>
<gene>
    <name evidence="1" type="primary">rplK</name>
    <name type="ordered locus">CLM_3960</name>
</gene>
<accession>C1FMW3</accession>
<keyword id="KW-0488">Methylation</keyword>
<keyword id="KW-0687">Ribonucleoprotein</keyword>
<keyword id="KW-0689">Ribosomal protein</keyword>
<keyword id="KW-0694">RNA-binding</keyword>
<keyword id="KW-0699">rRNA-binding</keyword>
<evidence type="ECO:0000255" key="1">
    <source>
        <dbReference type="HAMAP-Rule" id="MF_00736"/>
    </source>
</evidence>
<evidence type="ECO:0000305" key="2"/>
<name>RL11_CLOBJ</name>
<proteinExistence type="inferred from homology"/>
<sequence length="141" mass="14703">MAKKVVGMIKLQLPAGKASPAPPVGPALGQHGVNIMGFCKEFNAKTANQAGLIIPVVITVYQDRSFSFILKTPPAAVLLKKAAGIESGSGVPNKTKVAKVTKDQIREIAETKMPDLNAGSIETAMSMIAGTARSMGITVEE</sequence>
<reference key="1">
    <citation type="submission" date="2008-10" db="EMBL/GenBank/DDBJ databases">
        <title>Genome sequence of Clostridium botulinum A2 Kyoto.</title>
        <authorList>
            <person name="Shrivastava S."/>
            <person name="Brinkac L.M."/>
            <person name="Brown J.L."/>
            <person name="Bruce D."/>
            <person name="Detter C.C."/>
            <person name="Johnson E.A."/>
            <person name="Munk C.A."/>
            <person name="Smith L.A."/>
            <person name="Smith T.J."/>
            <person name="Sutton G."/>
            <person name="Brettin T.S."/>
        </authorList>
    </citation>
    <scope>NUCLEOTIDE SEQUENCE [LARGE SCALE GENOMIC DNA]</scope>
    <source>
        <strain>Kyoto / Type A2</strain>
    </source>
</reference>
<organism>
    <name type="scientific">Clostridium botulinum (strain Kyoto / Type A2)</name>
    <dbReference type="NCBI Taxonomy" id="536232"/>
    <lineage>
        <taxon>Bacteria</taxon>
        <taxon>Bacillati</taxon>
        <taxon>Bacillota</taxon>
        <taxon>Clostridia</taxon>
        <taxon>Eubacteriales</taxon>
        <taxon>Clostridiaceae</taxon>
        <taxon>Clostridium</taxon>
    </lineage>
</organism>
<comment type="function">
    <text evidence="1">Forms part of the ribosomal stalk which helps the ribosome interact with GTP-bound translation factors.</text>
</comment>
<comment type="subunit">
    <text evidence="1">Part of the ribosomal stalk of the 50S ribosomal subunit. Interacts with L10 and the large rRNA to form the base of the stalk. L10 forms an elongated spine to which L12 dimers bind in a sequential fashion forming a multimeric L10(L12)X complex.</text>
</comment>
<comment type="PTM">
    <text evidence="1">One or more lysine residues are methylated.</text>
</comment>
<comment type="similarity">
    <text evidence="1">Belongs to the universal ribosomal protein uL11 family.</text>
</comment>
<protein>
    <recommendedName>
        <fullName evidence="1">Large ribosomal subunit protein uL11</fullName>
    </recommendedName>
    <alternativeName>
        <fullName evidence="2">50S ribosomal protein L11</fullName>
    </alternativeName>
</protein>